<dbReference type="EMBL" id="U35252">
    <property type="protein sequence ID" value="AAA76727.1"/>
    <property type="molecule type" value="Genomic_DNA"/>
</dbReference>
<dbReference type="EMBL" id="D84432">
    <property type="protein sequence ID" value="BAA12567.1"/>
    <property type="molecule type" value="Genomic_DNA"/>
</dbReference>
<dbReference type="EMBL" id="AL009126">
    <property type="protein sequence ID" value="CAB14367.2"/>
    <property type="molecule type" value="Genomic_DNA"/>
</dbReference>
<dbReference type="PIR" id="C69712">
    <property type="entry name" value="C69712"/>
</dbReference>
<dbReference type="RefSeq" id="NP_390316.2">
    <property type="nucleotide sequence ID" value="NC_000964.3"/>
</dbReference>
<dbReference type="RefSeq" id="WP_003230250.1">
    <property type="nucleotide sequence ID" value="NZ_OZ025638.1"/>
</dbReference>
<dbReference type="PDB" id="3TUF">
    <property type="method" value="X-ray"/>
    <property type="resolution" value="2.26 A"/>
    <property type="chains" value="A=25-218"/>
</dbReference>
<dbReference type="PDB" id="3UZ0">
    <property type="method" value="X-ray"/>
    <property type="resolution" value="2.82 A"/>
    <property type="chains" value="A/C=90-218"/>
</dbReference>
<dbReference type="PDBsum" id="3TUF"/>
<dbReference type="PDBsum" id="3UZ0"/>
<dbReference type="SMR" id="P49785"/>
<dbReference type="DIP" id="DIP-60030N"/>
<dbReference type="FunCoup" id="P49785">
    <property type="interactions" value="107"/>
</dbReference>
<dbReference type="IntAct" id="P49785">
    <property type="interactions" value="1"/>
</dbReference>
<dbReference type="STRING" id="224308.BSU24360"/>
<dbReference type="TCDB" id="1.A.34.1.1">
    <property type="family name" value="the bacillus gap junction-like channel-forming complex (gj-cc) family"/>
</dbReference>
<dbReference type="PaxDb" id="224308-BSU24360"/>
<dbReference type="EnsemblBacteria" id="CAB14367">
    <property type="protein sequence ID" value="CAB14367"/>
    <property type="gene ID" value="BSU_24360"/>
</dbReference>
<dbReference type="GeneID" id="86873017"/>
<dbReference type="GeneID" id="938600"/>
<dbReference type="KEGG" id="bsu:BSU24360"/>
<dbReference type="PATRIC" id="fig|224308.179.peg.2654"/>
<dbReference type="eggNOG" id="ENOG5030IKQ">
    <property type="taxonomic scope" value="Bacteria"/>
</dbReference>
<dbReference type="InParanoid" id="P49785"/>
<dbReference type="OrthoDB" id="2939102at2"/>
<dbReference type="BioCyc" id="BSUB:BSU24360-MONOMER"/>
<dbReference type="EvolutionaryTrace" id="P49785"/>
<dbReference type="Proteomes" id="UP000001570">
    <property type="component" value="Chromosome"/>
</dbReference>
<dbReference type="GO" id="GO:0005886">
    <property type="term" value="C:plasma membrane"/>
    <property type="evidence" value="ECO:0007669"/>
    <property type="project" value="UniProtKB-SubCell"/>
</dbReference>
<dbReference type="GO" id="GO:0030435">
    <property type="term" value="P:sporulation resulting in formation of a cellular spore"/>
    <property type="evidence" value="ECO:0007669"/>
    <property type="project" value="UniProtKB-KW"/>
</dbReference>
<dbReference type="DisProt" id="DP00862"/>
<dbReference type="Gene3D" id="1.10.287.4300">
    <property type="entry name" value="Stage III sporulation protein AH-like"/>
    <property type="match status" value="1"/>
</dbReference>
<dbReference type="InterPro" id="IPR024232">
    <property type="entry name" value="SpoIIIAH"/>
</dbReference>
<dbReference type="InterPro" id="IPR038503">
    <property type="entry name" value="SpoIIIAH_sf"/>
</dbReference>
<dbReference type="Pfam" id="PF12685">
    <property type="entry name" value="SpoIIIAH"/>
    <property type="match status" value="1"/>
</dbReference>
<comment type="function">
    <text evidence="3 4 5 6 7 9 10">Involved in forespore engulfment. Forms a channel with SpoIIIAH that is open on the forespore end and closed (or gated) on the mother cell end. This allows sigma-E-directed gene expression in the mother-cell compartment of the sporangium to trigger the activation of sigma-G forespore-specific gene expression by a pathway of intercellular signaling.</text>
</comment>
<comment type="subunit">
    <text evidence="3 4 8 10">Interacts with SpoIIQ.</text>
</comment>
<comment type="interaction">
    <interactant intactId="EBI-6413215">
        <id>P49785</id>
    </interactant>
    <interactant intactId="EBI-6413220">
        <id>P71044</id>
        <label>spoIIQ</label>
    </interactant>
    <organismsDiffer>false</organismsDiffer>
    <experiments>13</experiments>
</comment>
<comment type="subcellular location">
    <subcellularLocation>
        <location evidence="11">Cell membrane</location>
        <topology evidence="11">Single-pass membrane protein</topology>
    </subcellularLocation>
    <text evidence="3 4 10">Localizes to the engulfing septal membranes during spore formation.</text>
</comment>
<comment type="developmental stage">
    <text evidence="4">Specifically expressed in the mother cell during sporulation under the control of the sigma-E factor.</text>
</comment>
<sequence length="218" mass="23806">MLKKQTVWLLTMLSLVVVLSVYYIMSPESKNAVQMQSEKSASDSGEVATEKAPAKQDTKEKSGTETEKGKEDGTKGTKDSSADKETSAEASEKGTVVTETADDDLFTTYRLDLEDARSKEREELNAIVSSDDATAKEKSEAYDKMTALSEVEGTEKQLETLIKTQGYEDALVNAEGDKINITVKSDKHSKSKATAIIDLVAKEIKTMKDVAVTFEPSK</sequence>
<evidence type="ECO:0000255" key="1"/>
<evidence type="ECO:0000256" key="2">
    <source>
        <dbReference type="SAM" id="MobiDB-lite"/>
    </source>
</evidence>
<evidence type="ECO:0000269" key="3">
    <source>
    </source>
</evidence>
<evidence type="ECO:0000269" key="4">
    <source>
    </source>
</evidence>
<evidence type="ECO:0000269" key="5">
    <source>
    </source>
</evidence>
<evidence type="ECO:0000269" key="6">
    <source>
    </source>
</evidence>
<evidence type="ECO:0000269" key="7">
    <source>
    </source>
</evidence>
<evidence type="ECO:0000269" key="8">
    <source>
    </source>
</evidence>
<evidence type="ECO:0000269" key="9">
    <source>
    </source>
</evidence>
<evidence type="ECO:0000269" key="10">
    <source>
    </source>
</evidence>
<evidence type="ECO:0000305" key="11"/>
<evidence type="ECO:0007829" key="12">
    <source>
        <dbReference type="PDB" id="3TUF"/>
    </source>
</evidence>
<evidence type="ECO:0007829" key="13">
    <source>
        <dbReference type="PDB" id="3UZ0"/>
    </source>
</evidence>
<organism>
    <name type="scientific">Bacillus subtilis (strain 168)</name>
    <dbReference type="NCBI Taxonomy" id="224308"/>
    <lineage>
        <taxon>Bacteria</taxon>
        <taxon>Bacillati</taxon>
        <taxon>Bacillota</taxon>
        <taxon>Bacilli</taxon>
        <taxon>Bacillales</taxon>
        <taxon>Bacillaceae</taxon>
        <taxon>Bacillus</taxon>
    </lineage>
</organism>
<feature type="chain" id="PRO_0000072072" description="Stage III sporulation protein AH">
    <location>
        <begin position="1"/>
        <end position="218"/>
    </location>
</feature>
<feature type="transmembrane region" description="Helical" evidence="1">
    <location>
        <begin position="7"/>
        <end position="26"/>
    </location>
</feature>
<feature type="region of interest" description="Disordered" evidence="2">
    <location>
        <begin position="33"/>
        <end position="99"/>
    </location>
</feature>
<feature type="compositionally biased region" description="Polar residues" evidence="2">
    <location>
        <begin position="33"/>
        <end position="43"/>
    </location>
</feature>
<feature type="compositionally biased region" description="Basic and acidic residues" evidence="2">
    <location>
        <begin position="48"/>
        <end position="92"/>
    </location>
</feature>
<feature type="sequence conflict" description="In Ref. 2; BAA12567." evidence="11" ref="2">
    <original>E</original>
    <variation>G</variation>
    <location>
        <position position="155"/>
    </location>
</feature>
<feature type="helix" evidence="12">
    <location>
        <begin position="105"/>
        <end position="128"/>
    </location>
</feature>
<feature type="strand" evidence="13">
    <location>
        <begin position="131"/>
        <end position="133"/>
    </location>
</feature>
<feature type="helix" evidence="12">
    <location>
        <begin position="135"/>
        <end position="164"/>
    </location>
</feature>
<feature type="strand" evidence="12">
    <location>
        <begin position="170"/>
        <end position="173"/>
    </location>
</feature>
<feature type="strand" evidence="12">
    <location>
        <begin position="175"/>
        <end position="184"/>
    </location>
</feature>
<feature type="helix" evidence="12">
    <location>
        <begin position="190"/>
        <end position="198"/>
    </location>
</feature>
<feature type="helix" evidence="12">
    <location>
        <begin position="202"/>
        <end position="205"/>
    </location>
</feature>
<feature type="strand" evidence="12">
    <location>
        <begin position="208"/>
        <end position="215"/>
    </location>
</feature>
<reference key="1">
    <citation type="submission" date="1995-09" db="EMBL/GenBank/DDBJ databases">
        <authorList>
            <person name="Guerout-Fleury A.M."/>
            <person name="Gonzy-Treboul G."/>
            <person name="Stragier P."/>
        </authorList>
    </citation>
    <scope>NUCLEOTIDE SEQUENCE [GENOMIC DNA]</scope>
    <source>
        <strain>168 / JH642</strain>
    </source>
</reference>
<reference key="2">
    <citation type="journal article" date="1996" name="Microbiology">
        <title>Systematic sequencing of the 283 kb 210 degrees-232 degrees region of the Bacillus subtilis genome containing the skin element and many sporulation genes.</title>
        <authorList>
            <person name="Mizuno M."/>
            <person name="Masuda S."/>
            <person name="Takemaru K."/>
            <person name="Hosono S."/>
            <person name="Sato T."/>
            <person name="Takeuchi M."/>
            <person name="Kobayashi Y."/>
        </authorList>
    </citation>
    <scope>NUCLEOTIDE SEQUENCE [GENOMIC DNA]</scope>
    <source>
        <strain>168 / JH642</strain>
    </source>
</reference>
<reference key="3">
    <citation type="journal article" date="1997" name="Nature">
        <title>The complete genome sequence of the Gram-positive bacterium Bacillus subtilis.</title>
        <authorList>
            <person name="Kunst F."/>
            <person name="Ogasawara N."/>
            <person name="Moszer I."/>
            <person name="Albertini A.M."/>
            <person name="Alloni G."/>
            <person name="Azevedo V."/>
            <person name="Bertero M.G."/>
            <person name="Bessieres P."/>
            <person name="Bolotin A."/>
            <person name="Borchert S."/>
            <person name="Borriss R."/>
            <person name="Boursier L."/>
            <person name="Brans A."/>
            <person name="Braun M."/>
            <person name="Brignell S.C."/>
            <person name="Bron S."/>
            <person name="Brouillet S."/>
            <person name="Bruschi C.V."/>
            <person name="Caldwell B."/>
            <person name="Capuano V."/>
            <person name="Carter N.M."/>
            <person name="Choi S.-K."/>
            <person name="Codani J.-J."/>
            <person name="Connerton I.F."/>
            <person name="Cummings N.J."/>
            <person name="Daniel R.A."/>
            <person name="Denizot F."/>
            <person name="Devine K.M."/>
            <person name="Duesterhoeft A."/>
            <person name="Ehrlich S.D."/>
            <person name="Emmerson P.T."/>
            <person name="Entian K.-D."/>
            <person name="Errington J."/>
            <person name="Fabret C."/>
            <person name="Ferrari E."/>
            <person name="Foulger D."/>
            <person name="Fritz C."/>
            <person name="Fujita M."/>
            <person name="Fujita Y."/>
            <person name="Fuma S."/>
            <person name="Galizzi A."/>
            <person name="Galleron N."/>
            <person name="Ghim S.-Y."/>
            <person name="Glaser P."/>
            <person name="Goffeau A."/>
            <person name="Golightly E.J."/>
            <person name="Grandi G."/>
            <person name="Guiseppi G."/>
            <person name="Guy B.J."/>
            <person name="Haga K."/>
            <person name="Haiech J."/>
            <person name="Harwood C.R."/>
            <person name="Henaut A."/>
            <person name="Hilbert H."/>
            <person name="Holsappel S."/>
            <person name="Hosono S."/>
            <person name="Hullo M.-F."/>
            <person name="Itaya M."/>
            <person name="Jones L.-M."/>
            <person name="Joris B."/>
            <person name="Karamata D."/>
            <person name="Kasahara Y."/>
            <person name="Klaerr-Blanchard M."/>
            <person name="Klein C."/>
            <person name="Kobayashi Y."/>
            <person name="Koetter P."/>
            <person name="Koningstein G."/>
            <person name="Krogh S."/>
            <person name="Kumano M."/>
            <person name="Kurita K."/>
            <person name="Lapidus A."/>
            <person name="Lardinois S."/>
            <person name="Lauber J."/>
            <person name="Lazarevic V."/>
            <person name="Lee S.-M."/>
            <person name="Levine A."/>
            <person name="Liu H."/>
            <person name="Masuda S."/>
            <person name="Mauel C."/>
            <person name="Medigue C."/>
            <person name="Medina N."/>
            <person name="Mellado R.P."/>
            <person name="Mizuno M."/>
            <person name="Moestl D."/>
            <person name="Nakai S."/>
            <person name="Noback M."/>
            <person name="Noone D."/>
            <person name="O'Reilly M."/>
            <person name="Ogawa K."/>
            <person name="Ogiwara A."/>
            <person name="Oudega B."/>
            <person name="Park S.-H."/>
            <person name="Parro V."/>
            <person name="Pohl T.M."/>
            <person name="Portetelle D."/>
            <person name="Porwollik S."/>
            <person name="Prescott A.M."/>
            <person name="Presecan E."/>
            <person name="Pujic P."/>
            <person name="Purnelle B."/>
            <person name="Rapoport G."/>
            <person name="Rey M."/>
            <person name="Reynolds S."/>
            <person name="Rieger M."/>
            <person name="Rivolta C."/>
            <person name="Rocha E."/>
            <person name="Roche B."/>
            <person name="Rose M."/>
            <person name="Sadaie Y."/>
            <person name="Sato T."/>
            <person name="Scanlan E."/>
            <person name="Schleich S."/>
            <person name="Schroeter R."/>
            <person name="Scoffone F."/>
            <person name="Sekiguchi J."/>
            <person name="Sekowska A."/>
            <person name="Seror S.J."/>
            <person name="Serror P."/>
            <person name="Shin B.-S."/>
            <person name="Soldo B."/>
            <person name="Sorokin A."/>
            <person name="Tacconi E."/>
            <person name="Takagi T."/>
            <person name="Takahashi H."/>
            <person name="Takemaru K."/>
            <person name="Takeuchi M."/>
            <person name="Tamakoshi A."/>
            <person name="Tanaka T."/>
            <person name="Terpstra P."/>
            <person name="Tognoni A."/>
            <person name="Tosato V."/>
            <person name="Uchiyama S."/>
            <person name="Vandenbol M."/>
            <person name="Vannier F."/>
            <person name="Vassarotti A."/>
            <person name="Viari A."/>
            <person name="Wambutt R."/>
            <person name="Wedler E."/>
            <person name="Wedler H."/>
            <person name="Weitzenegger T."/>
            <person name="Winters P."/>
            <person name="Wipat A."/>
            <person name="Yamamoto H."/>
            <person name="Yamane K."/>
            <person name="Yasumoto K."/>
            <person name="Yata K."/>
            <person name="Yoshida K."/>
            <person name="Yoshikawa H.-F."/>
            <person name="Zumstein E."/>
            <person name="Yoshikawa H."/>
            <person name="Danchin A."/>
        </authorList>
    </citation>
    <scope>NUCLEOTIDE SEQUENCE [LARGE SCALE GENOMIC DNA]</scope>
    <source>
        <strain>168</strain>
    </source>
</reference>
<reference key="4">
    <citation type="journal article" date="2009" name="Microbiology">
        <title>From a consortium sequence to a unified sequence: the Bacillus subtilis 168 reference genome a decade later.</title>
        <authorList>
            <person name="Barbe V."/>
            <person name="Cruveiller S."/>
            <person name="Kunst F."/>
            <person name="Lenoble P."/>
            <person name="Meurice G."/>
            <person name="Sekowska A."/>
            <person name="Vallenet D."/>
            <person name="Wang T."/>
            <person name="Moszer I."/>
            <person name="Medigue C."/>
            <person name="Danchin A."/>
        </authorList>
    </citation>
    <scope>SEQUENCE REVISION TO 155</scope>
</reference>
<reference key="5">
    <citation type="journal article" date="2004" name="Genes Dev.">
        <title>Zipper-like interaction between proteins in adjacent daughter cells mediates protein localization.</title>
        <authorList>
            <person name="Blaylock B."/>
            <person name="Jiang X."/>
            <person name="Rubio A."/>
            <person name="Moran C.P. Jr."/>
            <person name="Pogliano K."/>
        </authorList>
    </citation>
    <scope>FUNCTION</scope>
    <scope>SUBCELLULAR LOCATION</scope>
    <scope>INTERACTION WITH SPOIIQ</scope>
</reference>
<reference key="6">
    <citation type="journal article" date="2005" name="Mol. Microbiol.">
        <title>Subcellular localization of a sporulation membrane protein is achieved through a network of interactions along and across the septum.</title>
        <authorList>
            <person name="Doan T."/>
            <person name="Marquis K.A."/>
            <person name="Rudner D.Z."/>
        </authorList>
    </citation>
    <scope>FUNCTION</scope>
    <scope>DEVELOPMENTAL STAGE</scope>
    <scope>SUBCELLULAR LOCATION</scope>
    <scope>INTERACTION WITH SPOIIQ</scope>
</reference>
<reference key="7">
    <citation type="journal article" date="2005" name="Mol. Microbiol.">
        <title>Engulfment-regulated proteolysis of SpoIIQ: evidence that dual checkpoints control sigma activity.</title>
        <authorList>
            <person name="Jiang X."/>
            <person name="Rubio A."/>
            <person name="Chiba S."/>
            <person name="Pogliano K."/>
        </authorList>
    </citation>
    <scope>FUNCTION</scope>
</reference>
<reference key="8">
    <citation type="journal article" date="2006" name="Cell">
        <title>Forespore engulfment mediated by a ratchet-like mechanism.</title>
        <authorList>
            <person name="Broder D.H."/>
            <person name="Pogliano K."/>
        </authorList>
    </citation>
    <scope>FUNCTION</scope>
</reference>
<reference key="9">
    <citation type="journal article" date="2007" name="Mol. Microbiol.">
        <title>Dual localization pathways for the engulfment proteins during Bacillus subtilis sporulation.</title>
        <authorList>
            <person name="Aung S."/>
            <person name="Shum J."/>
            <person name="Abanes-De Mello A."/>
            <person name="Broder D.H."/>
            <person name="Fredlund-Gutierrez J."/>
            <person name="Chiba S."/>
            <person name="Pogliano K."/>
        </authorList>
    </citation>
    <scope>FUNCTION</scope>
</reference>
<reference key="10">
    <citation type="journal article" date="2008" name="J. Biol. Chem.">
        <title>SpoIIQ anchors membrane proteins on both sides of the sporulation septum in Bacillus subtilis.</title>
        <authorList>
            <person name="Campo N."/>
            <person name="Marquis K.A."/>
            <person name="Rudner D.Z."/>
        </authorList>
    </citation>
    <scope>INTERACTION WITH SPOIIQ</scope>
</reference>
<reference key="11">
    <citation type="journal article" date="2008" name="Mol. Microbiol.">
        <title>A novel pathway of intercellular signalling in Bacillus subtilis involves a protein with similarity to a component of type III secretion channels.</title>
        <authorList>
            <person name="Camp A.H."/>
            <person name="Losick R."/>
        </authorList>
    </citation>
    <scope>FUNCTION</scope>
</reference>
<reference key="12">
    <citation type="journal article" date="2008" name="Proc. Natl. Acad. Sci. U.S.A.">
        <title>A channel connecting the mother cell and forespore during bacterial endospore formation.</title>
        <authorList>
            <person name="Meisner J."/>
            <person name="Wang X."/>
            <person name="Serrano M."/>
            <person name="Henriques A.O."/>
            <person name="Moran C.P. Jr."/>
        </authorList>
    </citation>
    <scope>FUNCTION</scope>
    <scope>SUBCELLULAR LOCATION</scope>
    <scope>INTERACTION WITH SPOIIQ</scope>
</reference>
<gene>
    <name type="primary">spoIIIAH</name>
    <name type="ordered locus">BSU24360</name>
</gene>
<accession>P49785</accession>
<name>SP3AH_BACSU</name>
<protein>
    <recommendedName>
        <fullName>Stage III sporulation protein AH</fullName>
    </recommendedName>
</protein>
<proteinExistence type="evidence at protein level"/>
<keyword id="KW-0002">3D-structure</keyword>
<keyword id="KW-1003">Cell membrane</keyword>
<keyword id="KW-0472">Membrane</keyword>
<keyword id="KW-1185">Reference proteome</keyword>
<keyword id="KW-0749">Sporulation</keyword>
<keyword id="KW-0812">Transmembrane</keyword>
<keyword id="KW-1133">Transmembrane helix</keyword>